<sequence>MTEKENLGGSTLLPAYFGEFGGQFVAESLLPALDQLEKAFVDATNSPEFREELGGYLRDYLGRPTPLTECSNLPLAGEGKGFARIFLKREDLVHGGAHKTNQVIGQVLLAKRMGKTRIIAETGAGQHGTATALACALMGLECVVYMGAKDVARQQPNVYRMQLHGAKVIPVESGSGTLKDAVNEALRDWTATFHESHYLLGTAAGPHPFPTIVREFHKVISEEAKAQMLERTGKLPDVVVACVGGGSNAIGMFADFIDDEGVELVGAEPAGEGLDSGKHGATITNGQIGILHGTRSYLMRNSDGQVEESYSISAGLDYPGVGPQHAHLHATGRATYVGITDAEALQAFQYLARYEGIIPALESSHAFAYALKRAKTAEEEGQNLTILVSLSGRGDKDVDHVRRTLEENPELILKDNR</sequence>
<organism>
    <name type="scientific">Corynebacterium glutamicum (strain ATCC 13032 / DSM 20300 / JCM 1318 / BCRC 11384 / CCUG 27702 / LMG 3730 / NBRC 12168 / NCIMB 10025 / NRRL B-2784 / 534)</name>
    <dbReference type="NCBI Taxonomy" id="196627"/>
    <lineage>
        <taxon>Bacteria</taxon>
        <taxon>Bacillati</taxon>
        <taxon>Actinomycetota</taxon>
        <taxon>Actinomycetes</taxon>
        <taxon>Mycobacteriales</taxon>
        <taxon>Corynebacteriaceae</taxon>
        <taxon>Corynebacterium</taxon>
    </lineage>
</organism>
<keyword id="KW-0028">Amino-acid biosynthesis</keyword>
<keyword id="KW-0057">Aromatic amino acid biosynthesis</keyword>
<keyword id="KW-0456">Lyase</keyword>
<keyword id="KW-0663">Pyridoxal phosphate</keyword>
<keyword id="KW-1185">Reference proteome</keyword>
<keyword id="KW-0822">Tryptophan biosynthesis</keyword>
<proteinExistence type="inferred from homology"/>
<gene>
    <name type="primary">trpB</name>
    <name type="ordered locus">Cgl3034</name>
    <name type="ordered locus">cg3363</name>
</gene>
<accession>P06561</accession>
<reference key="1">
    <citation type="journal article" date="1986" name="Nucleic Acids Res.">
        <title>Complete nucleotide and deduced amino acid sequences of the Brevibacterium lactofermentum tryptophan operon.</title>
        <authorList>
            <person name="Matsui K."/>
            <person name="Sano K."/>
            <person name="Ohtsubo E."/>
        </authorList>
    </citation>
    <scope>NUCLEOTIDE SEQUENCE [GENOMIC DNA]</scope>
</reference>
<reference key="2">
    <citation type="journal article" date="2003" name="Appl. Microbiol. Biotechnol.">
        <title>The Corynebacterium glutamicum genome: features and impacts on biotechnological processes.</title>
        <authorList>
            <person name="Ikeda M."/>
            <person name="Nakagawa S."/>
        </authorList>
    </citation>
    <scope>NUCLEOTIDE SEQUENCE [LARGE SCALE GENOMIC DNA]</scope>
    <source>
        <strain>ATCC 13032 / DSM 20300 / JCM 1318 / BCRC 11384 / CCUG 27702 / LMG 3730 / NBRC 12168 / NCIMB 10025 / NRRL B-2784 / 534</strain>
    </source>
</reference>
<reference key="3">
    <citation type="journal article" date="2003" name="J. Biotechnol.">
        <title>The complete Corynebacterium glutamicum ATCC 13032 genome sequence and its impact on the production of L-aspartate-derived amino acids and vitamins.</title>
        <authorList>
            <person name="Kalinowski J."/>
            <person name="Bathe B."/>
            <person name="Bartels D."/>
            <person name="Bischoff N."/>
            <person name="Bott M."/>
            <person name="Burkovski A."/>
            <person name="Dusch N."/>
            <person name="Eggeling L."/>
            <person name="Eikmanns B.J."/>
            <person name="Gaigalat L."/>
            <person name="Goesmann A."/>
            <person name="Hartmann M."/>
            <person name="Huthmacher K."/>
            <person name="Kraemer R."/>
            <person name="Linke B."/>
            <person name="McHardy A.C."/>
            <person name="Meyer F."/>
            <person name="Moeckel B."/>
            <person name="Pfefferle W."/>
            <person name="Puehler A."/>
            <person name="Rey D.A."/>
            <person name="Rueckert C."/>
            <person name="Rupp O."/>
            <person name="Sahm H."/>
            <person name="Wendisch V.F."/>
            <person name="Wiegraebe I."/>
            <person name="Tauch A."/>
        </authorList>
    </citation>
    <scope>NUCLEOTIDE SEQUENCE [LARGE SCALE GENOMIC DNA]</scope>
    <source>
        <strain>ATCC 13032 / DSM 20300 / JCM 1318 / BCRC 11384 / CCUG 27702 / LMG 3730 / NBRC 12168 / NCIMB 10025 / NRRL B-2784 / 534</strain>
    </source>
</reference>
<name>TRPB_CORGL</name>
<evidence type="ECO:0000250" key="1"/>
<evidence type="ECO:0000305" key="2"/>
<protein>
    <recommendedName>
        <fullName>Tryptophan synthase beta chain</fullName>
        <ecNumber>4.2.1.20</ecNumber>
    </recommendedName>
</protein>
<dbReference type="EC" id="4.2.1.20"/>
<dbReference type="EMBL" id="X04960">
    <property type="protein sequence ID" value="CAA28627.1"/>
    <property type="molecule type" value="Genomic_DNA"/>
</dbReference>
<dbReference type="EMBL" id="BA000036">
    <property type="protein sequence ID" value="BAC00428.1"/>
    <property type="molecule type" value="Genomic_DNA"/>
</dbReference>
<dbReference type="EMBL" id="BX927157">
    <property type="protein sequence ID" value="CAF18974.1"/>
    <property type="molecule type" value="Genomic_DNA"/>
</dbReference>
<dbReference type="PIR" id="F24723">
    <property type="entry name" value="F24723"/>
</dbReference>
<dbReference type="RefSeq" id="NP_602227.1">
    <property type="nucleotide sequence ID" value="NC_003450.3"/>
</dbReference>
<dbReference type="RefSeq" id="WP_004567953.1">
    <property type="nucleotide sequence ID" value="NC_006958.1"/>
</dbReference>
<dbReference type="SMR" id="P06561"/>
<dbReference type="STRING" id="196627.cg3363"/>
<dbReference type="GeneID" id="1020976"/>
<dbReference type="KEGG" id="cgb:cg3363"/>
<dbReference type="KEGG" id="cgl:Cgl3034"/>
<dbReference type="PATRIC" id="fig|196627.13.peg.2968"/>
<dbReference type="eggNOG" id="COG0133">
    <property type="taxonomic scope" value="Bacteria"/>
</dbReference>
<dbReference type="HOGENOM" id="CLU_016734_3_1_11"/>
<dbReference type="OrthoDB" id="9766131at2"/>
<dbReference type="BioCyc" id="CORYNE:G18NG-12655-MONOMER"/>
<dbReference type="UniPathway" id="UPA00035">
    <property type="reaction ID" value="UER00044"/>
</dbReference>
<dbReference type="Proteomes" id="UP000000582">
    <property type="component" value="Chromosome"/>
</dbReference>
<dbReference type="Proteomes" id="UP000001009">
    <property type="component" value="Chromosome"/>
</dbReference>
<dbReference type="GO" id="GO:0005737">
    <property type="term" value="C:cytoplasm"/>
    <property type="evidence" value="ECO:0007669"/>
    <property type="project" value="TreeGrafter"/>
</dbReference>
<dbReference type="GO" id="GO:0004834">
    <property type="term" value="F:tryptophan synthase activity"/>
    <property type="evidence" value="ECO:0007669"/>
    <property type="project" value="UniProtKB-UniRule"/>
</dbReference>
<dbReference type="CDD" id="cd06446">
    <property type="entry name" value="Trp-synth_B"/>
    <property type="match status" value="1"/>
</dbReference>
<dbReference type="FunFam" id="3.40.50.1100:FF:000001">
    <property type="entry name" value="Tryptophan synthase beta chain"/>
    <property type="match status" value="1"/>
</dbReference>
<dbReference type="FunFam" id="3.40.50.1100:FF:000004">
    <property type="entry name" value="Tryptophan synthase beta chain"/>
    <property type="match status" value="1"/>
</dbReference>
<dbReference type="Gene3D" id="3.40.50.1100">
    <property type="match status" value="2"/>
</dbReference>
<dbReference type="HAMAP" id="MF_00133">
    <property type="entry name" value="Trp_synth_beta"/>
    <property type="match status" value="1"/>
</dbReference>
<dbReference type="InterPro" id="IPR006653">
    <property type="entry name" value="Trp_synth_b_CS"/>
</dbReference>
<dbReference type="InterPro" id="IPR006654">
    <property type="entry name" value="Trp_synth_beta"/>
</dbReference>
<dbReference type="InterPro" id="IPR023026">
    <property type="entry name" value="Trp_synth_beta/beta-like"/>
</dbReference>
<dbReference type="InterPro" id="IPR001926">
    <property type="entry name" value="TrpB-like_PALP"/>
</dbReference>
<dbReference type="InterPro" id="IPR036052">
    <property type="entry name" value="TrpB-like_PALP_sf"/>
</dbReference>
<dbReference type="NCBIfam" id="TIGR00263">
    <property type="entry name" value="trpB"/>
    <property type="match status" value="1"/>
</dbReference>
<dbReference type="PANTHER" id="PTHR48077:SF3">
    <property type="entry name" value="TRYPTOPHAN SYNTHASE"/>
    <property type="match status" value="1"/>
</dbReference>
<dbReference type="PANTHER" id="PTHR48077">
    <property type="entry name" value="TRYPTOPHAN SYNTHASE-RELATED"/>
    <property type="match status" value="1"/>
</dbReference>
<dbReference type="Pfam" id="PF00291">
    <property type="entry name" value="PALP"/>
    <property type="match status" value="1"/>
</dbReference>
<dbReference type="PIRSF" id="PIRSF001413">
    <property type="entry name" value="Trp_syn_beta"/>
    <property type="match status" value="1"/>
</dbReference>
<dbReference type="SUPFAM" id="SSF53686">
    <property type="entry name" value="Tryptophan synthase beta subunit-like PLP-dependent enzymes"/>
    <property type="match status" value="1"/>
</dbReference>
<dbReference type="PROSITE" id="PS00168">
    <property type="entry name" value="TRP_SYNTHASE_BETA"/>
    <property type="match status" value="1"/>
</dbReference>
<comment type="function">
    <text evidence="1">The beta subunit is responsible for the synthesis of L-tryptophan from indole and L-serine.</text>
</comment>
<comment type="catalytic activity">
    <reaction>
        <text>(1S,2R)-1-C-(indol-3-yl)glycerol 3-phosphate + L-serine = D-glyceraldehyde 3-phosphate + L-tryptophan + H2O</text>
        <dbReference type="Rhea" id="RHEA:10532"/>
        <dbReference type="ChEBI" id="CHEBI:15377"/>
        <dbReference type="ChEBI" id="CHEBI:33384"/>
        <dbReference type="ChEBI" id="CHEBI:57912"/>
        <dbReference type="ChEBI" id="CHEBI:58866"/>
        <dbReference type="ChEBI" id="CHEBI:59776"/>
        <dbReference type="EC" id="4.2.1.20"/>
    </reaction>
</comment>
<comment type="cofactor">
    <cofactor evidence="1">
        <name>pyridoxal 5'-phosphate</name>
        <dbReference type="ChEBI" id="CHEBI:597326"/>
    </cofactor>
</comment>
<comment type="pathway">
    <text>Amino-acid biosynthesis; L-tryptophan biosynthesis; L-tryptophan from chorismate: step 5/5.</text>
</comment>
<comment type="subunit">
    <text evidence="1">Tetramer of two alpha and two beta chains.</text>
</comment>
<comment type="similarity">
    <text evidence="2">Belongs to the TrpB family.</text>
</comment>
<feature type="chain" id="PRO_0000098946" description="Tryptophan synthase beta chain">
    <location>
        <begin position="1"/>
        <end position="417"/>
    </location>
</feature>
<feature type="modified residue" description="N6-(pyridoxal phosphate)lysine" evidence="1">
    <location>
        <position position="99"/>
    </location>
</feature>
<feature type="sequence conflict" description="In Ref. 1; CAA28627." evidence="2" ref="1">
    <original>A</original>
    <variation>R</variation>
    <location>
        <position position="203"/>
    </location>
</feature>
<feature type="sequence conflict" description="In Ref. 1; CAA28627." evidence="2" ref="1">
    <original>PQHAHLHATGRATYVGITDAEALQAFQY</original>
    <variation>HSTHTCTPPARTTLVSPTPKPSKHSSS</variation>
    <location>
        <begin position="323"/>
        <end position="350"/>
    </location>
</feature>
<feature type="sequence conflict" description="In Ref. 1; CAA28627." evidence="2" ref="1">
    <original>ALESSHAFAYA</original>
    <variation>RTGILTRVRLR</variation>
    <location>
        <begin position="360"/>
        <end position="370"/>
    </location>
</feature>
<feature type="sequence conflict" description="In Ref. 1; CAA28627." evidence="2" ref="1">
    <original>VRR</original>
    <variation>RAG</variation>
    <location>
        <begin position="401"/>
        <end position="403"/>
    </location>
</feature>